<feature type="chain" id="PRO_0000164902" description="Minor spike protein">
    <location>
        <begin position="1"/>
        <end position="328"/>
    </location>
</feature>
<dbReference type="EMBL" id="M14428">
    <property type="protein sequence ID" value="AAA32592.1"/>
    <property type="molecule type" value="Genomic_DNA"/>
</dbReference>
<dbReference type="PIR" id="JS0459">
    <property type="entry name" value="JS0459"/>
</dbReference>
<dbReference type="SMR" id="P07933"/>
<dbReference type="Proteomes" id="UP000002129">
    <property type="component" value="Segment"/>
</dbReference>
<dbReference type="GO" id="GO:0019028">
    <property type="term" value="C:viral capsid"/>
    <property type="evidence" value="ECO:0007669"/>
    <property type="project" value="UniProtKB-KW"/>
</dbReference>
<dbReference type="GO" id="GO:0046718">
    <property type="term" value="P:symbiont entry into host cell"/>
    <property type="evidence" value="ECO:0007669"/>
    <property type="project" value="UniProtKB-KW"/>
</dbReference>
<dbReference type="Gene3D" id="6.10.250.2700">
    <property type="match status" value="1"/>
</dbReference>
<dbReference type="InterPro" id="IPR006777">
    <property type="entry name" value="Microvir_H"/>
</dbReference>
<dbReference type="Pfam" id="PF04687">
    <property type="entry name" value="Microvir_H"/>
    <property type="match status" value="1"/>
</dbReference>
<dbReference type="PIRSF" id="PIRSF004160">
    <property type="entry name" value="Microvir_H"/>
    <property type="match status" value="1"/>
</dbReference>
<sequence>MFGAIAGGIASALAGGVMSKLFGGGQKAASGGIQGDVLATDNNTVGMGDAGIKSAIQGSNVPNSDEAAPSFLSGAMAKAGKGLLEGTLQAGTSAVSDKLLDLVGLGGKSAADKGKDTRDYLAAAFPELNAWERAGAGASSSAIVDAGFENQKELTKMQLDNQKEIAEMQNETQKEIAGIQSATSRQNTKDQVYAQNEMLAYQQKESTARVASIMENTNLSKQQQVSEIMRQMLTQAQTAGQYFTNDQIKEMTRKVSAEVDLVHQQTQNQRYGSSHIGATAKDISNVVTDAASGVVDIFHGIDKAVADTWNNFWKDGKADGIGSNLSRK</sequence>
<proteinExistence type="inferred from homology"/>
<comment type="function">
    <text evidence="1">Minor spike component of the viral shell. Involved in the ejection of the phage DNA in the host and is injected with the DNA in the periplasmic space of the host. Involved in the determination of the phage host-range (By similarity).</text>
</comment>
<comment type="subunit">
    <text>The virion is composed of 60 copies each of the F, G, and J proteins, and 12 copies of the H protein. There are 12 spikes which are each composed of 5 G and one H proteins.</text>
</comment>
<comment type="subcellular location">
    <subcellularLocation>
        <location evidence="2">Virion</location>
    </subcellularLocation>
</comment>
<organism>
    <name type="scientific">Enterobacteria phage S13</name>
    <name type="common">Bacteriophage S13</name>
    <dbReference type="NCBI Taxonomy" id="10844"/>
    <lineage>
        <taxon>Viruses</taxon>
        <taxon>Monodnaviria</taxon>
        <taxon>Sangervirae</taxon>
        <taxon>Phixviricota</taxon>
        <taxon>Malgrandaviricetes</taxon>
        <taxon>Petitvirales</taxon>
        <taxon>Microviridae</taxon>
        <taxon>Bullavirinae</taxon>
        <taxon>Sinsheimervirus</taxon>
        <taxon>Escherichia phage phiX174</taxon>
        <taxon>Escherichia phage phiX174</taxon>
    </lineage>
</organism>
<accession>P07933</accession>
<evidence type="ECO:0000250" key="1"/>
<evidence type="ECO:0000305" key="2"/>
<keyword id="KW-0167">Capsid protein</keyword>
<keyword id="KW-1185">Reference proteome</keyword>
<keyword id="KW-1171">Viral genome ejection through host cell envelope</keyword>
<keyword id="KW-1162">Viral penetration into host cytoplasm</keyword>
<keyword id="KW-0946">Virion</keyword>
<keyword id="KW-1160">Virus entry into host cell</keyword>
<reference key="1">
    <citation type="journal article" date="1985" name="Gene">
        <title>Nucleotide sequence and genome organization of bacteriophage S13 DNA.</title>
        <authorList>
            <person name="Lau P.C.K."/>
            <person name="Spencer J.H."/>
        </authorList>
    </citation>
    <scope>NUCLEOTIDE SEQUENCE [GENOMIC DNA]</scope>
</reference>
<gene>
    <name type="primary">H</name>
</gene>
<protein>
    <recommendedName>
        <fullName>Minor spike protein</fullName>
    </recommendedName>
    <alternativeName>
        <fullName>H protein</fullName>
    </alternativeName>
    <alternativeName>
        <fullName>Pilot protein</fullName>
    </alternativeName>
</protein>
<organismHost>
    <name type="scientific">Salmonella</name>
    <dbReference type="NCBI Taxonomy" id="590"/>
</organismHost>
<name>VGH_BPS13</name>